<evidence type="ECO:0000250" key="1">
    <source>
        <dbReference type="UniProtKB" id="Q91X86"/>
    </source>
</evidence>
<evidence type="ECO:0000250" key="2">
    <source>
        <dbReference type="UniProtKB" id="Q9Y2Y6"/>
    </source>
</evidence>
<evidence type="ECO:0000255" key="3"/>
<evidence type="ECO:0000305" key="4"/>
<protein>
    <recommendedName>
        <fullName>Transmembrane protein 98</fullName>
    </recommendedName>
</protein>
<proteinExistence type="evidence at transcript level"/>
<sequence>METVVIVAIGVLATIFLASFAALVVVCRQRYCRTKNLLTNYNNKPTVDLIGAMETQSEPSDLELDDVVITNPHIEAILEDEDWIEDASGLVSHCIAILKICHTLTEKLVAMTMGSGAKMKSPSSLSDIIIVAKRISPRVDDVVRSMYPPLDPKLLDARTTALLLSVSHLVLVTKNACHLTGGMDWIDQSLSAAEDHLAVLREAALATEPERPMTGADNFLQEQSAI</sequence>
<comment type="subcellular location">
    <subcellularLocation>
        <location evidence="1">Endoplasmic reticulum membrane</location>
        <topology evidence="2">Single-pass type II membrane protein</topology>
    </subcellularLocation>
    <subcellularLocation>
        <location evidence="2">Cell membrane</location>
        <topology evidence="2">Single-pass type II membrane protein</topology>
    </subcellularLocation>
    <subcellularLocation>
        <location evidence="1">Secreted</location>
    </subcellularLocation>
    <subcellularLocation>
        <location evidence="2">Secreted</location>
        <location evidence="2">Extracellular exosome</location>
    </subcellularLocation>
    <text evidence="2">Secreted by exosomes through a non-classical pathway.</text>
</comment>
<comment type="similarity">
    <text evidence="4">Belongs to the TMEM98 family.</text>
</comment>
<feature type="chain" id="PRO_0000251714" description="Transmembrane protein 98">
    <location>
        <begin position="1"/>
        <end position="226"/>
    </location>
</feature>
<feature type="topological domain" description="Cytoplasmic" evidence="2">
    <location>
        <begin position="1"/>
        <end position="3"/>
    </location>
</feature>
<feature type="transmembrane region" description="Helical" evidence="3">
    <location>
        <begin position="4"/>
        <end position="24"/>
    </location>
</feature>
<feature type="topological domain" description="Extracellular" evidence="2">
    <location>
        <begin position="25"/>
        <end position="226"/>
    </location>
</feature>
<organism>
    <name type="scientific">Xenopus laevis</name>
    <name type="common">African clawed frog</name>
    <dbReference type="NCBI Taxonomy" id="8355"/>
    <lineage>
        <taxon>Eukaryota</taxon>
        <taxon>Metazoa</taxon>
        <taxon>Chordata</taxon>
        <taxon>Craniata</taxon>
        <taxon>Vertebrata</taxon>
        <taxon>Euteleostomi</taxon>
        <taxon>Amphibia</taxon>
        <taxon>Batrachia</taxon>
        <taxon>Anura</taxon>
        <taxon>Pipoidea</taxon>
        <taxon>Pipidae</taxon>
        <taxon>Xenopodinae</taxon>
        <taxon>Xenopus</taxon>
        <taxon>Xenopus</taxon>
    </lineage>
</organism>
<reference key="1">
    <citation type="submission" date="2004-06" db="EMBL/GenBank/DDBJ databases">
        <authorList>
            <consortium name="NIH - Xenopus Gene Collection (XGC) project"/>
        </authorList>
    </citation>
    <scope>NUCLEOTIDE SEQUENCE [LARGE SCALE MRNA]</scope>
    <source>
        <tissue>Embryo</tissue>
    </source>
</reference>
<gene>
    <name type="primary">tmem98</name>
</gene>
<name>TMM98_XENLA</name>
<dbReference type="EMBL" id="BC072151">
    <property type="protein sequence ID" value="AAH72151.1"/>
    <property type="molecule type" value="mRNA"/>
</dbReference>
<dbReference type="RefSeq" id="NP_001085130.1">
    <property type="nucleotide sequence ID" value="NM_001091661.1"/>
</dbReference>
<dbReference type="SMR" id="Q6INX1"/>
<dbReference type="DNASU" id="432207"/>
<dbReference type="GeneID" id="432207"/>
<dbReference type="KEGG" id="xla:432207"/>
<dbReference type="AGR" id="Xenbase:XB-GENE-6255754"/>
<dbReference type="CTD" id="432207"/>
<dbReference type="Xenbase" id="XB-GENE-6255754">
    <property type="gene designation" value="tmem98.L"/>
</dbReference>
<dbReference type="OMA" id="HMEVIRE"/>
<dbReference type="OrthoDB" id="5978425at2759"/>
<dbReference type="Proteomes" id="UP000186698">
    <property type="component" value="Chromosome 9_10L"/>
</dbReference>
<dbReference type="Bgee" id="432207">
    <property type="expression patterns" value="Expressed in liver and 16 other cell types or tissues"/>
</dbReference>
<dbReference type="GO" id="GO:0005783">
    <property type="term" value="C:endoplasmic reticulum"/>
    <property type="evidence" value="ECO:0000318"/>
    <property type="project" value="GO_Central"/>
</dbReference>
<dbReference type="GO" id="GO:0005789">
    <property type="term" value="C:endoplasmic reticulum membrane"/>
    <property type="evidence" value="ECO:0000250"/>
    <property type="project" value="UniProtKB"/>
</dbReference>
<dbReference type="GO" id="GO:0005576">
    <property type="term" value="C:extracellular region"/>
    <property type="evidence" value="ECO:0007669"/>
    <property type="project" value="UniProtKB-SubCell"/>
</dbReference>
<dbReference type="GO" id="GO:0005886">
    <property type="term" value="C:plasma membrane"/>
    <property type="evidence" value="ECO:0007669"/>
    <property type="project" value="UniProtKB-SubCell"/>
</dbReference>
<dbReference type="GO" id="GO:0031642">
    <property type="term" value="P:negative regulation of myelination"/>
    <property type="evidence" value="ECO:0000250"/>
    <property type="project" value="UniProtKB"/>
</dbReference>
<dbReference type="GO" id="GO:0048715">
    <property type="term" value="P:negative regulation of oligodendrocyte differentiation"/>
    <property type="evidence" value="ECO:0000250"/>
    <property type="project" value="UniProtKB"/>
</dbReference>
<dbReference type="GO" id="GO:1900181">
    <property type="term" value="P:negative regulation of protein localization to nucleus"/>
    <property type="evidence" value="ECO:0000250"/>
    <property type="project" value="UniProtKB"/>
</dbReference>
<dbReference type="GO" id="GO:0010955">
    <property type="term" value="P:negative regulation of protein processing"/>
    <property type="evidence" value="ECO:0000250"/>
    <property type="project" value="UniProtKB"/>
</dbReference>
<dbReference type="FunFam" id="1.20.1410.10:FF:000003">
    <property type="entry name" value="Transmembrane protein 98"/>
    <property type="match status" value="1"/>
</dbReference>
<dbReference type="Gene3D" id="1.20.1410.10">
    <property type="entry name" value="I/LWEQ domain"/>
    <property type="match status" value="1"/>
</dbReference>
<dbReference type="InterPro" id="IPR029668">
    <property type="entry name" value="TMEM98"/>
</dbReference>
<dbReference type="PANTHER" id="PTHR32510">
    <property type="entry name" value="TRANSMEMBRANE PROTEIN 98"/>
    <property type="match status" value="1"/>
</dbReference>
<dbReference type="PANTHER" id="PTHR32510:SF3">
    <property type="entry name" value="TRANSMEMBRANE PROTEIN 98"/>
    <property type="match status" value="1"/>
</dbReference>
<keyword id="KW-1003">Cell membrane</keyword>
<keyword id="KW-0256">Endoplasmic reticulum</keyword>
<keyword id="KW-0472">Membrane</keyword>
<keyword id="KW-1185">Reference proteome</keyword>
<keyword id="KW-0964">Secreted</keyword>
<keyword id="KW-0812">Transmembrane</keyword>
<keyword id="KW-1133">Transmembrane helix</keyword>
<accession>Q6INX1</accession>